<reference key="1">
    <citation type="journal article" date="2004" name="Nat. Genet.">
        <title>Evidence in the Legionella pneumophila genome for exploitation of host cell functions and high genome plasticity.</title>
        <authorList>
            <person name="Cazalet C."/>
            <person name="Rusniok C."/>
            <person name="Brueggemann H."/>
            <person name="Zidane N."/>
            <person name="Magnier A."/>
            <person name="Ma L."/>
            <person name="Tichit M."/>
            <person name="Jarraud S."/>
            <person name="Bouchier C."/>
            <person name="Vandenesch F."/>
            <person name="Kunst F."/>
            <person name="Etienne J."/>
            <person name="Glaser P."/>
            <person name="Buchrieser C."/>
        </authorList>
    </citation>
    <scope>NUCLEOTIDE SEQUENCE [LARGE SCALE GENOMIC DNA]</scope>
    <source>
        <strain>Paris</strain>
    </source>
</reference>
<feature type="chain" id="PRO_0000174985" description="Thymidine kinase">
    <location>
        <begin position="1"/>
        <end position="209"/>
    </location>
</feature>
<feature type="active site" description="Proton acceptor" evidence="1">
    <location>
        <position position="89"/>
    </location>
</feature>
<feature type="binding site" evidence="1">
    <location>
        <begin position="9"/>
        <end position="16"/>
    </location>
    <ligand>
        <name>ATP</name>
        <dbReference type="ChEBI" id="CHEBI:30616"/>
    </ligand>
</feature>
<feature type="binding site" evidence="1">
    <location>
        <begin position="88"/>
        <end position="91"/>
    </location>
    <ligand>
        <name>ATP</name>
        <dbReference type="ChEBI" id="CHEBI:30616"/>
    </ligand>
</feature>
<feature type="binding site" evidence="1">
    <location>
        <position position="146"/>
    </location>
    <ligand>
        <name>Zn(2+)</name>
        <dbReference type="ChEBI" id="CHEBI:29105"/>
    </ligand>
</feature>
<feature type="binding site" evidence="1">
    <location>
        <position position="148"/>
    </location>
    <ligand>
        <name>Zn(2+)</name>
        <dbReference type="ChEBI" id="CHEBI:29105"/>
    </ligand>
</feature>
<feature type="binding site" evidence="1">
    <location>
        <position position="183"/>
    </location>
    <ligand>
        <name>Zn(2+)</name>
        <dbReference type="ChEBI" id="CHEBI:29105"/>
    </ligand>
</feature>
<feature type="binding site" evidence="1">
    <location>
        <position position="186"/>
    </location>
    <ligand>
        <name>Zn(2+)</name>
        <dbReference type="ChEBI" id="CHEBI:29105"/>
    </ligand>
</feature>
<proteinExistence type="inferred from homology"/>
<accession>Q5X7B5</accession>
<protein>
    <recommendedName>
        <fullName evidence="1">Thymidine kinase</fullName>
        <ecNumber evidence="1">2.7.1.21</ecNumber>
    </recommendedName>
</protein>
<evidence type="ECO:0000255" key="1">
    <source>
        <dbReference type="HAMAP-Rule" id="MF_00124"/>
    </source>
</evidence>
<sequence length="209" mass="23984">MAKLYFYYAAMNAGKSTVLLQSSYNYRERGMQTLLFTPAIDTRFQYGTICSRIGLSEQAYAFNNSDNLYVLTQEFQLQTQKYSCVLIDEAQFLTREQVYQLTEITDQMSIPVLAYGLRTDFRGELFPGSQFLLAWADELIELKTICHCGRKAIMNMRIDENGQAVIEGEQVLIGGNESYVATCRLHYKRGEAGKTFPRNKLFNKDTNTF</sequence>
<organism>
    <name type="scientific">Legionella pneumophila (strain Paris)</name>
    <dbReference type="NCBI Taxonomy" id="297246"/>
    <lineage>
        <taxon>Bacteria</taxon>
        <taxon>Pseudomonadati</taxon>
        <taxon>Pseudomonadota</taxon>
        <taxon>Gammaproteobacteria</taxon>
        <taxon>Legionellales</taxon>
        <taxon>Legionellaceae</taxon>
        <taxon>Legionella</taxon>
    </lineage>
</organism>
<gene>
    <name evidence="1" type="primary">tdk</name>
    <name type="ordered locus">lpp0690</name>
</gene>
<dbReference type="EC" id="2.7.1.21" evidence="1"/>
<dbReference type="EMBL" id="CR628336">
    <property type="protein sequence ID" value="CAH11838.1"/>
    <property type="molecule type" value="Genomic_DNA"/>
</dbReference>
<dbReference type="RefSeq" id="WP_011213227.1">
    <property type="nucleotide sequence ID" value="NC_006368.1"/>
</dbReference>
<dbReference type="SMR" id="Q5X7B5"/>
<dbReference type="KEGG" id="lpp:lpp0690"/>
<dbReference type="LegioList" id="lpp0690"/>
<dbReference type="HOGENOM" id="CLU_064400_2_1_6"/>
<dbReference type="GO" id="GO:0005829">
    <property type="term" value="C:cytosol"/>
    <property type="evidence" value="ECO:0007669"/>
    <property type="project" value="TreeGrafter"/>
</dbReference>
<dbReference type="GO" id="GO:0005524">
    <property type="term" value="F:ATP binding"/>
    <property type="evidence" value="ECO:0007669"/>
    <property type="project" value="UniProtKB-UniRule"/>
</dbReference>
<dbReference type="GO" id="GO:0004797">
    <property type="term" value="F:thymidine kinase activity"/>
    <property type="evidence" value="ECO:0007669"/>
    <property type="project" value="UniProtKB-UniRule"/>
</dbReference>
<dbReference type="GO" id="GO:0008270">
    <property type="term" value="F:zinc ion binding"/>
    <property type="evidence" value="ECO:0007669"/>
    <property type="project" value="UniProtKB-UniRule"/>
</dbReference>
<dbReference type="GO" id="GO:0071897">
    <property type="term" value="P:DNA biosynthetic process"/>
    <property type="evidence" value="ECO:0007669"/>
    <property type="project" value="UniProtKB-KW"/>
</dbReference>
<dbReference type="GO" id="GO:0046104">
    <property type="term" value="P:thymidine metabolic process"/>
    <property type="evidence" value="ECO:0007669"/>
    <property type="project" value="TreeGrafter"/>
</dbReference>
<dbReference type="FunFam" id="3.40.50.300:FF:000323">
    <property type="entry name" value="Thymidine kinase"/>
    <property type="match status" value="1"/>
</dbReference>
<dbReference type="Gene3D" id="3.30.60.20">
    <property type="match status" value="1"/>
</dbReference>
<dbReference type="Gene3D" id="3.40.50.300">
    <property type="entry name" value="P-loop containing nucleotide triphosphate hydrolases"/>
    <property type="match status" value="1"/>
</dbReference>
<dbReference type="HAMAP" id="MF_00124">
    <property type="entry name" value="Thymidine_kinase"/>
    <property type="match status" value="1"/>
</dbReference>
<dbReference type="InterPro" id="IPR027417">
    <property type="entry name" value="P-loop_NTPase"/>
</dbReference>
<dbReference type="InterPro" id="IPR001267">
    <property type="entry name" value="Thymidine_kinase"/>
</dbReference>
<dbReference type="InterPro" id="IPR020633">
    <property type="entry name" value="Thymidine_kinase_CS"/>
</dbReference>
<dbReference type="NCBIfam" id="NF003300">
    <property type="entry name" value="PRK04296.1-5"/>
    <property type="match status" value="1"/>
</dbReference>
<dbReference type="PANTHER" id="PTHR11441">
    <property type="entry name" value="THYMIDINE KINASE"/>
    <property type="match status" value="1"/>
</dbReference>
<dbReference type="PANTHER" id="PTHR11441:SF0">
    <property type="entry name" value="THYMIDINE KINASE, CYTOSOLIC"/>
    <property type="match status" value="1"/>
</dbReference>
<dbReference type="Pfam" id="PF00265">
    <property type="entry name" value="TK"/>
    <property type="match status" value="1"/>
</dbReference>
<dbReference type="PIRSF" id="PIRSF035805">
    <property type="entry name" value="TK_cell"/>
    <property type="match status" value="1"/>
</dbReference>
<dbReference type="SUPFAM" id="SSF57716">
    <property type="entry name" value="Glucocorticoid receptor-like (DNA-binding domain)"/>
    <property type="match status" value="1"/>
</dbReference>
<dbReference type="SUPFAM" id="SSF52540">
    <property type="entry name" value="P-loop containing nucleoside triphosphate hydrolases"/>
    <property type="match status" value="1"/>
</dbReference>
<dbReference type="PROSITE" id="PS00603">
    <property type="entry name" value="TK_CELLULAR_TYPE"/>
    <property type="match status" value="1"/>
</dbReference>
<comment type="catalytic activity">
    <reaction evidence="1">
        <text>thymidine + ATP = dTMP + ADP + H(+)</text>
        <dbReference type="Rhea" id="RHEA:19129"/>
        <dbReference type="ChEBI" id="CHEBI:15378"/>
        <dbReference type="ChEBI" id="CHEBI:17748"/>
        <dbReference type="ChEBI" id="CHEBI:30616"/>
        <dbReference type="ChEBI" id="CHEBI:63528"/>
        <dbReference type="ChEBI" id="CHEBI:456216"/>
        <dbReference type="EC" id="2.7.1.21"/>
    </reaction>
</comment>
<comment type="subunit">
    <text evidence="1">Homotetramer.</text>
</comment>
<comment type="subcellular location">
    <subcellularLocation>
        <location evidence="1">Cytoplasm</location>
    </subcellularLocation>
</comment>
<comment type="similarity">
    <text evidence="1">Belongs to the thymidine kinase family.</text>
</comment>
<name>KITH_LEGPA</name>
<keyword id="KW-0067">ATP-binding</keyword>
<keyword id="KW-0963">Cytoplasm</keyword>
<keyword id="KW-0237">DNA synthesis</keyword>
<keyword id="KW-0418">Kinase</keyword>
<keyword id="KW-0479">Metal-binding</keyword>
<keyword id="KW-0547">Nucleotide-binding</keyword>
<keyword id="KW-0808">Transferase</keyword>
<keyword id="KW-0862">Zinc</keyword>